<feature type="transit peptide" description="Mitochondrion">
    <location>
        <begin position="1"/>
        <end status="unknown"/>
    </location>
</feature>
<feature type="chain" id="PRO_0000020480" description="Dihydrolipoyllysine-residue acetyltransferase component of pyruvate dehydrogenase complex, mitochondrial">
    <location>
        <begin status="unknown"/>
        <end position="635"/>
    </location>
</feature>
<feature type="domain" description="Lipoyl-binding 1" evidence="2">
    <location>
        <begin position="83"/>
        <end position="160"/>
    </location>
</feature>
<feature type="domain" description="Lipoyl-binding 2" evidence="2">
    <location>
        <begin position="206"/>
        <end position="283"/>
    </location>
</feature>
<feature type="domain" description="Peripheral subunit-binding (PSBD)" evidence="3">
    <location>
        <begin position="342"/>
        <end position="379"/>
    </location>
</feature>
<feature type="region of interest" description="Disordered" evidence="4">
    <location>
        <begin position="171"/>
        <end position="204"/>
    </location>
</feature>
<feature type="region of interest" description="Disordered" evidence="4">
    <location>
        <begin position="295"/>
        <end position="338"/>
    </location>
</feature>
<feature type="region of interest" description="Disordered" evidence="4">
    <location>
        <begin position="382"/>
        <end position="413"/>
    </location>
</feature>
<feature type="region of interest" description="Catalytic" evidence="1">
    <location>
        <begin position="403"/>
        <end position="635"/>
    </location>
</feature>
<feature type="compositionally biased region" description="Polar residues" evidence="4">
    <location>
        <begin position="174"/>
        <end position="184"/>
    </location>
</feature>
<feature type="compositionally biased region" description="Basic and acidic residues" evidence="4">
    <location>
        <begin position="187"/>
        <end position="197"/>
    </location>
</feature>
<feature type="compositionally biased region" description="Low complexity" evidence="4">
    <location>
        <begin position="298"/>
        <end position="334"/>
    </location>
</feature>
<feature type="compositionally biased region" description="Low complexity" evidence="4">
    <location>
        <begin position="387"/>
        <end position="404"/>
    </location>
</feature>
<feature type="modified residue" description="N6-lipoyllysine" evidence="1 2">
    <location>
        <position position="124"/>
    </location>
</feature>
<feature type="modified residue" description="N6-lipoyllysine" evidence="1 2">
    <location>
        <position position="247"/>
    </location>
</feature>
<feature type="sequence conflict" description="In Ref. 2; AAA16511." evidence="5" ref="2">
    <original>E</original>
    <variation>V</variation>
    <location>
        <position position="97"/>
    </location>
</feature>
<feature type="sequence conflict" description="In Ref. 2; AAA16511." evidence="5" ref="2">
    <original>A</original>
    <variation>R</variation>
    <location>
        <position position="118"/>
    </location>
</feature>
<feature type="sequence conflict" description="In Ref. 2; AAA16511." evidence="5" ref="2">
    <original>FQ</original>
    <variation>S</variation>
    <location>
        <begin position="129"/>
        <end position="130"/>
    </location>
</feature>
<feature type="sequence conflict" description="In Ref. 2; AAA16511." evidence="5" ref="2">
    <original>AA</original>
    <variation>LP</variation>
    <location>
        <begin position="472"/>
        <end position="473"/>
    </location>
</feature>
<organism>
    <name type="scientific">Dictyostelium discoideum</name>
    <name type="common">Social amoeba</name>
    <dbReference type="NCBI Taxonomy" id="44689"/>
    <lineage>
        <taxon>Eukaryota</taxon>
        <taxon>Amoebozoa</taxon>
        <taxon>Evosea</taxon>
        <taxon>Eumycetozoa</taxon>
        <taxon>Dictyostelia</taxon>
        <taxon>Dictyosteliales</taxon>
        <taxon>Dictyosteliaceae</taxon>
        <taxon>Dictyostelium</taxon>
    </lineage>
</organism>
<proteinExistence type="evidence at protein level"/>
<evidence type="ECO:0000250" key="1"/>
<evidence type="ECO:0000255" key="2">
    <source>
        <dbReference type="PROSITE-ProRule" id="PRU01066"/>
    </source>
</evidence>
<evidence type="ECO:0000255" key="3">
    <source>
        <dbReference type="PROSITE-ProRule" id="PRU01170"/>
    </source>
</evidence>
<evidence type="ECO:0000256" key="4">
    <source>
        <dbReference type="SAM" id="MobiDB-lite"/>
    </source>
</evidence>
<evidence type="ECO:0000305" key="5"/>
<reference key="1">
    <citation type="journal article" date="2005" name="Nature">
        <title>The genome of the social amoeba Dictyostelium discoideum.</title>
        <authorList>
            <person name="Eichinger L."/>
            <person name="Pachebat J.A."/>
            <person name="Gloeckner G."/>
            <person name="Rajandream M.A."/>
            <person name="Sucgang R."/>
            <person name="Berriman M."/>
            <person name="Song J."/>
            <person name="Olsen R."/>
            <person name="Szafranski K."/>
            <person name="Xu Q."/>
            <person name="Tunggal B."/>
            <person name="Kummerfeld S."/>
            <person name="Madera M."/>
            <person name="Konfortov B.A."/>
            <person name="Rivero F."/>
            <person name="Bankier A.T."/>
            <person name="Lehmann R."/>
            <person name="Hamlin N."/>
            <person name="Davies R."/>
            <person name="Gaudet P."/>
            <person name="Fey P."/>
            <person name="Pilcher K."/>
            <person name="Chen G."/>
            <person name="Saunders D."/>
            <person name="Sodergren E.J."/>
            <person name="Davis P."/>
            <person name="Kerhornou A."/>
            <person name="Nie X."/>
            <person name="Hall N."/>
            <person name="Anjard C."/>
            <person name="Hemphill L."/>
            <person name="Bason N."/>
            <person name="Farbrother P."/>
            <person name="Desany B."/>
            <person name="Just E."/>
            <person name="Morio T."/>
            <person name="Rost R."/>
            <person name="Churcher C.M."/>
            <person name="Cooper J."/>
            <person name="Haydock S."/>
            <person name="van Driessche N."/>
            <person name="Cronin A."/>
            <person name="Goodhead I."/>
            <person name="Muzny D.M."/>
            <person name="Mourier T."/>
            <person name="Pain A."/>
            <person name="Lu M."/>
            <person name="Harper D."/>
            <person name="Lindsay R."/>
            <person name="Hauser H."/>
            <person name="James K.D."/>
            <person name="Quiles M."/>
            <person name="Madan Babu M."/>
            <person name="Saito T."/>
            <person name="Buchrieser C."/>
            <person name="Wardroper A."/>
            <person name="Felder M."/>
            <person name="Thangavelu M."/>
            <person name="Johnson D."/>
            <person name="Knights A."/>
            <person name="Loulseged H."/>
            <person name="Mungall K.L."/>
            <person name="Oliver K."/>
            <person name="Price C."/>
            <person name="Quail M.A."/>
            <person name="Urushihara H."/>
            <person name="Hernandez J."/>
            <person name="Rabbinowitsch E."/>
            <person name="Steffen D."/>
            <person name="Sanders M."/>
            <person name="Ma J."/>
            <person name="Kohara Y."/>
            <person name="Sharp S."/>
            <person name="Simmonds M.N."/>
            <person name="Spiegler S."/>
            <person name="Tivey A."/>
            <person name="Sugano S."/>
            <person name="White B."/>
            <person name="Walker D."/>
            <person name="Woodward J.R."/>
            <person name="Winckler T."/>
            <person name="Tanaka Y."/>
            <person name="Shaulsky G."/>
            <person name="Schleicher M."/>
            <person name="Weinstock G.M."/>
            <person name="Rosenthal A."/>
            <person name="Cox E.C."/>
            <person name="Chisholm R.L."/>
            <person name="Gibbs R.A."/>
            <person name="Loomis W.F."/>
            <person name="Platzer M."/>
            <person name="Kay R.R."/>
            <person name="Williams J.G."/>
            <person name="Dear P.H."/>
            <person name="Noegel A.A."/>
            <person name="Barrell B.G."/>
            <person name="Kuspa A."/>
        </authorList>
    </citation>
    <scope>NUCLEOTIDE SEQUENCE [LARGE SCALE GENOMIC DNA]</scope>
    <source>
        <strain>AX4</strain>
    </source>
</reference>
<reference key="2">
    <citation type="submission" date="1994-02" db="EMBL/GenBank/DDBJ databases">
        <title>Dihydrolipoamide transacetylase gene from Dictyostelium discoideum.</title>
        <authorList>
            <person name="Mueller-Taubenberger A."/>
        </authorList>
    </citation>
    <scope>NUCLEOTIDE SEQUENCE [MRNA] OF 43-635</scope>
    <source>
        <strain>AX2</strain>
    </source>
</reference>
<reference key="3">
    <citation type="submission" date="2010-01" db="UniProtKB">
        <authorList>
            <person name="Bienvenut W.V."/>
            <person name="Veltman D.M."/>
            <person name="Insall R.H."/>
        </authorList>
    </citation>
    <scope>PROTEIN SEQUENCE OF 141-148; 341-348; 355-369; 461-469 AND 515-529</scope>
    <scope>IDENTIFICATION BY MASS SPECTROMETRY</scope>
</reference>
<comment type="function">
    <text>The pyruvate dehydrogenase complex catalyzes the overall conversion of pyruvate to acetyl-CoA and CO(2). It contains multiple copies of three enzymatic components: pyruvate dehydrogenase (E1), dihydrolipoamide acetyltransferase (E2) and lipoamide dehydrogenase (E3).</text>
</comment>
<comment type="catalytic activity">
    <reaction>
        <text>N(6)-[(R)-dihydrolipoyl]-L-lysyl-[protein] + acetyl-CoA = N(6)-[(R)-S(8)-acetyldihydrolipoyl]-L-lysyl-[protein] + CoA</text>
        <dbReference type="Rhea" id="RHEA:17017"/>
        <dbReference type="Rhea" id="RHEA-COMP:10475"/>
        <dbReference type="Rhea" id="RHEA-COMP:10478"/>
        <dbReference type="ChEBI" id="CHEBI:57287"/>
        <dbReference type="ChEBI" id="CHEBI:57288"/>
        <dbReference type="ChEBI" id="CHEBI:83100"/>
        <dbReference type="ChEBI" id="CHEBI:83111"/>
        <dbReference type="EC" id="2.3.1.12"/>
    </reaction>
</comment>
<comment type="cofactor">
    <cofactor evidence="1">
        <name>(R)-lipoate</name>
        <dbReference type="ChEBI" id="CHEBI:83088"/>
    </cofactor>
    <text evidence="1">Binds 2 lipoyl cofactors covalently.</text>
</comment>
<comment type="subunit">
    <text>20 to 30 alpha(2)-beta(2) tetramers of E1 + 6 homodimers of E3 + 60 copies of E2.</text>
</comment>
<comment type="subcellular location">
    <subcellularLocation>
        <location>Mitochondrion matrix</location>
    </subcellularLocation>
</comment>
<comment type="similarity">
    <text evidence="5">Belongs to the 2-oxoacid dehydrogenase family.</text>
</comment>
<comment type="sequence caution" evidence="5">
    <conflict type="frameshift">
        <sequence resource="EMBL-CDS" id="AAA16511"/>
    </conflict>
</comment>
<dbReference type="EC" id="2.3.1.12"/>
<dbReference type="EMBL" id="AAFI02000023">
    <property type="protein sequence ID" value="EAL68096.1"/>
    <property type="molecule type" value="Genomic_DNA"/>
</dbReference>
<dbReference type="EMBL" id="U06634">
    <property type="protein sequence ID" value="AAA16511.1"/>
    <property type="status" value="ALT_FRAME"/>
    <property type="molecule type" value="mRNA"/>
</dbReference>
<dbReference type="RefSeq" id="XP_642438.1">
    <property type="nucleotide sequence ID" value="XM_637346.1"/>
</dbReference>
<dbReference type="SMR" id="P36413"/>
<dbReference type="FunCoup" id="P36413">
    <property type="interactions" value="786"/>
</dbReference>
<dbReference type="STRING" id="44689.P36413"/>
<dbReference type="GlyGen" id="P36413">
    <property type="glycosylation" value="2 sites"/>
</dbReference>
<dbReference type="PaxDb" id="44689-DDB0215387"/>
<dbReference type="EnsemblProtists" id="EAL68096">
    <property type="protein sequence ID" value="EAL68096"/>
    <property type="gene ID" value="DDB_G0277847"/>
</dbReference>
<dbReference type="GeneID" id="8621644"/>
<dbReference type="KEGG" id="ddi:DDB_G0277847"/>
<dbReference type="dictyBase" id="DDB_G0277847">
    <property type="gene designation" value="pdhC"/>
</dbReference>
<dbReference type="VEuPathDB" id="AmoebaDB:DDB_G0277847"/>
<dbReference type="eggNOG" id="KOG0557">
    <property type="taxonomic scope" value="Eukaryota"/>
</dbReference>
<dbReference type="HOGENOM" id="CLU_016733_10_2_1"/>
<dbReference type="InParanoid" id="P36413"/>
<dbReference type="OMA" id="TMEFESF"/>
<dbReference type="PhylomeDB" id="P36413"/>
<dbReference type="Reactome" id="R-DDI-9857492">
    <property type="pathway name" value="Protein lipoylation"/>
</dbReference>
<dbReference type="Reactome" id="R-DDI-9861559">
    <property type="pathway name" value="PDH complex synthesizes acetyl-CoA from PYR"/>
</dbReference>
<dbReference type="PRO" id="PR:P36413"/>
<dbReference type="Proteomes" id="UP000002195">
    <property type="component" value="Chromosome 3"/>
</dbReference>
<dbReference type="GO" id="GO:0005759">
    <property type="term" value="C:mitochondrial matrix"/>
    <property type="evidence" value="ECO:0007669"/>
    <property type="project" value="UniProtKB-SubCell"/>
</dbReference>
<dbReference type="GO" id="GO:0045254">
    <property type="term" value="C:pyruvate dehydrogenase complex"/>
    <property type="evidence" value="ECO:0000318"/>
    <property type="project" value="GO_Central"/>
</dbReference>
<dbReference type="GO" id="GO:0004742">
    <property type="term" value="F:dihydrolipoyllysine-residue acetyltransferase activity"/>
    <property type="evidence" value="ECO:0000318"/>
    <property type="project" value="GO_Central"/>
</dbReference>
<dbReference type="GO" id="GO:0006086">
    <property type="term" value="P:pyruvate decarboxylation to acetyl-CoA"/>
    <property type="evidence" value="ECO:0000318"/>
    <property type="project" value="GO_Central"/>
</dbReference>
<dbReference type="CDD" id="cd06849">
    <property type="entry name" value="lipoyl_domain"/>
    <property type="match status" value="2"/>
</dbReference>
<dbReference type="FunFam" id="2.40.50.100:FF:000010">
    <property type="entry name" value="Acetyltransferase component of pyruvate dehydrogenase complex"/>
    <property type="match status" value="2"/>
</dbReference>
<dbReference type="FunFam" id="3.30.559.10:FF:000003">
    <property type="entry name" value="Acetyltransferase component of pyruvate dehydrogenase complex"/>
    <property type="match status" value="1"/>
</dbReference>
<dbReference type="Gene3D" id="2.40.50.100">
    <property type="match status" value="2"/>
</dbReference>
<dbReference type="Gene3D" id="3.30.559.10">
    <property type="entry name" value="Chloramphenicol acetyltransferase-like domain"/>
    <property type="match status" value="1"/>
</dbReference>
<dbReference type="Gene3D" id="4.10.320.10">
    <property type="entry name" value="E3-binding domain"/>
    <property type="match status" value="1"/>
</dbReference>
<dbReference type="InterPro" id="IPR001078">
    <property type="entry name" value="2-oxoacid_DH_actylTfrase"/>
</dbReference>
<dbReference type="InterPro" id="IPR000089">
    <property type="entry name" value="Biotin_lipoyl"/>
</dbReference>
<dbReference type="InterPro" id="IPR023213">
    <property type="entry name" value="CAT-like_dom_sf"/>
</dbReference>
<dbReference type="InterPro" id="IPR045257">
    <property type="entry name" value="E2/Pdx1"/>
</dbReference>
<dbReference type="InterPro" id="IPR036625">
    <property type="entry name" value="E3-bd_dom_sf"/>
</dbReference>
<dbReference type="InterPro" id="IPR006257">
    <property type="entry name" value="LAT1"/>
</dbReference>
<dbReference type="InterPro" id="IPR004167">
    <property type="entry name" value="PSBD"/>
</dbReference>
<dbReference type="InterPro" id="IPR011053">
    <property type="entry name" value="Single_hybrid_motif"/>
</dbReference>
<dbReference type="NCBIfam" id="TIGR01349">
    <property type="entry name" value="PDHac_trf_mito"/>
    <property type="match status" value="1"/>
</dbReference>
<dbReference type="PANTHER" id="PTHR23151">
    <property type="entry name" value="DIHYDROLIPOAMIDE ACETYL/SUCCINYL-TRANSFERASE-RELATED"/>
    <property type="match status" value="1"/>
</dbReference>
<dbReference type="PANTHER" id="PTHR23151:SF90">
    <property type="entry name" value="DIHYDROLIPOYLLYSINE-RESIDUE ACETYLTRANSFERASE COMPONENT OF PYRUVATE DEHYDROGENASE COMPLEX, MITOCHONDRIAL-RELATED"/>
    <property type="match status" value="1"/>
</dbReference>
<dbReference type="Pfam" id="PF00198">
    <property type="entry name" value="2-oxoacid_dh"/>
    <property type="match status" value="1"/>
</dbReference>
<dbReference type="Pfam" id="PF00364">
    <property type="entry name" value="Biotin_lipoyl"/>
    <property type="match status" value="2"/>
</dbReference>
<dbReference type="Pfam" id="PF02817">
    <property type="entry name" value="E3_binding"/>
    <property type="match status" value="1"/>
</dbReference>
<dbReference type="SUPFAM" id="SSF52777">
    <property type="entry name" value="CoA-dependent acyltransferases"/>
    <property type="match status" value="1"/>
</dbReference>
<dbReference type="SUPFAM" id="SSF47005">
    <property type="entry name" value="Peripheral subunit-binding domain of 2-oxo acid dehydrogenase complex"/>
    <property type="match status" value="1"/>
</dbReference>
<dbReference type="SUPFAM" id="SSF51230">
    <property type="entry name" value="Single hybrid motif"/>
    <property type="match status" value="2"/>
</dbReference>
<dbReference type="PROSITE" id="PS50968">
    <property type="entry name" value="BIOTINYL_LIPOYL"/>
    <property type="match status" value="2"/>
</dbReference>
<dbReference type="PROSITE" id="PS00189">
    <property type="entry name" value="LIPOYL"/>
    <property type="match status" value="2"/>
</dbReference>
<dbReference type="PROSITE" id="PS51826">
    <property type="entry name" value="PSBD"/>
    <property type="match status" value="1"/>
</dbReference>
<name>ODP2_DICDI</name>
<gene>
    <name type="primary">pdhC</name>
    <name type="synonym">dlaA</name>
    <name type="ORF">DDB_G0277847</name>
</gene>
<sequence>MLRAINQNSAKVVKSLKQQLVVLEATNVVAYTGTKSFTTTKTFNNTQTKPKIFTSSNVLSFSSPSSSNVFSEILNKRSYSSKGKEITMPALSPSMTEGNIVQWKKKEGDQIKAGDVIAEVETDKATMDFQYEDGNGYLAKILIPEGTKGIEINKPIAIIVSKKEDIESAVKNYKPSSQASSTPVQEEAPKPKQEAPKKSTKTYPAHKVVGMPALSPSMETGGIASWTKKEGDQIKAGDAIAEVETDKATMDFQYEDGNGYLAKILVPGGTSGIQINQPVCIIVKNKEDCDKFADYSVEEQSSSSSSSSQESTPSSSSSSSQESTPSQSSSQQTTRKSGERIFATPAARFEASSKGYDLSAINGTGPNNRILKADVLEFVPQKQEVAQQQQQQTTTTTKKPTTPTSSGEFTDIPHSNIRKVTAARLTESKQTIPHYYLTMECRVDKLLKLRSELNAMNTVKISVNDFIVKASAAALRDNPVVNSTWTDQFIRRYHNIDINVAVNTPQGLFTPIVRGVDMKGLNSISTSVKQLAEKAQNGKLHPSEFESGTFTISNLGMLGIKQFAAVINPPQAAILAVGTTETRVVLSNKPDSPYETATILSVTLSCDHRVIDGAVGAEWLKSFKDYVENPIKLIL</sequence>
<protein>
    <recommendedName>
        <fullName>Dihydrolipoyllysine-residue acetyltransferase component of pyruvate dehydrogenase complex, mitochondrial</fullName>
        <ecNumber>2.3.1.12</ecNumber>
    </recommendedName>
    <alternativeName>
        <fullName>Dihydrolipoamide acetyltransferase component of pyruvate dehydrogenase complex</fullName>
    </alternativeName>
    <alternativeName>
        <fullName>Pyruvate dehydrogenase complex component E2</fullName>
        <shortName>PDC-E2</shortName>
        <shortName>PDCE2</shortName>
    </alternativeName>
</protein>
<accession>P36413</accession>
<accession>Q54XW4</accession>
<keyword id="KW-0012">Acyltransferase</keyword>
<keyword id="KW-0903">Direct protein sequencing</keyword>
<keyword id="KW-0450">Lipoyl</keyword>
<keyword id="KW-0496">Mitochondrion</keyword>
<keyword id="KW-1185">Reference proteome</keyword>
<keyword id="KW-0677">Repeat</keyword>
<keyword id="KW-0808">Transferase</keyword>
<keyword id="KW-0809">Transit peptide</keyword>